<keyword id="KW-0963">Cytoplasm</keyword>
<keyword id="KW-0489">Methyltransferase</keyword>
<keyword id="KW-0698">rRNA processing</keyword>
<keyword id="KW-0949">S-adenosyl-L-methionine</keyword>
<keyword id="KW-0808">Transferase</keyword>
<evidence type="ECO:0000255" key="1">
    <source>
        <dbReference type="HAMAP-Rule" id="MF_00074"/>
    </source>
</evidence>
<reference key="1">
    <citation type="journal article" date="2008" name="J. Bacteriol.">
        <title>Genome of the actinomycete plant pathogen Clavibacter michiganensis subsp. sepedonicus suggests recent niche adaptation.</title>
        <authorList>
            <person name="Bentley S.D."/>
            <person name="Corton C."/>
            <person name="Brown S.E."/>
            <person name="Barron A."/>
            <person name="Clark L."/>
            <person name="Doggett J."/>
            <person name="Harris B."/>
            <person name="Ormond D."/>
            <person name="Quail M.A."/>
            <person name="May G."/>
            <person name="Francis D."/>
            <person name="Knudson D."/>
            <person name="Parkhill J."/>
            <person name="Ishimaru C.A."/>
        </authorList>
    </citation>
    <scope>NUCLEOTIDE SEQUENCE [LARGE SCALE GENOMIC DNA]</scope>
    <source>
        <strain>ATCC 33113 / DSM 20744 / JCM 9667 / LMG 2889 / ICMP 2535 / C-1</strain>
    </source>
</reference>
<gene>
    <name evidence="1" type="primary">rsmG</name>
    <name type="ordered locus">CMS3109</name>
</gene>
<proteinExistence type="inferred from homology"/>
<accession>B0RDP8</accession>
<dbReference type="EC" id="2.1.1.-" evidence="1"/>
<dbReference type="EMBL" id="AM849034">
    <property type="protein sequence ID" value="CAQ03177.1"/>
    <property type="molecule type" value="Genomic_DNA"/>
</dbReference>
<dbReference type="RefSeq" id="WP_012300313.1">
    <property type="nucleotide sequence ID" value="NZ_MZMN01000003.1"/>
</dbReference>
<dbReference type="SMR" id="B0RDP8"/>
<dbReference type="STRING" id="31964.CMS3109"/>
<dbReference type="KEGG" id="cms:CMS3109"/>
<dbReference type="eggNOG" id="COG0357">
    <property type="taxonomic scope" value="Bacteria"/>
</dbReference>
<dbReference type="HOGENOM" id="CLU_065341_5_0_11"/>
<dbReference type="OrthoDB" id="9808773at2"/>
<dbReference type="Proteomes" id="UP000001318">
    <property type="component" value="Chromosome"/>
</dbReference>
<dbReference type="GO" id="GO:0005829">
    <property type="term" value="C:cytosol"/>
    <property type="evidence" value="ECO:0007669"/>
    <property type="project" value="TreeGrafter"/>
</dbReference>
<dbReference type="GO" id="GO:0070043">
    <property type="term" value="F:rRNA (guanine-N7-)-methyltransferase activity"/>
    <property type="evidence" value="ECO:0007669"/>
    <property type="project" value="UniProtKB-UniRule"/>
</dbReference>
<dbReference type="CDD" id="cd02440">
    <property type="entry name" value="AdoMet_MTases"/>
    <property type="match status" value="1"/>
</dbReference>
<dbReference type="Gene3D" id="3.40.50.150">
    <property type="entry name" value="Vaccinia Virus protein VP39"/>
    <property type="match status" value="1"/>
</dbReference>
<dbReference type="HAMAP" id="MF_00074">
    <property type="entry name" value="16SrRNA_methyltr_G"/>
    <property type="match status" value="1"/>
</dbReference>
<dbReference type="InterPro" id="IPR003682">
    <property type="entry name" value="rRNA_ssu_MeTfrase_G"/>
</dbReference>
<dbReference type="InterPro" id="IPR029063">
    <property type="entry name" value="SAM-dependent_MTases_sf"/>
</dbReference>
<dbReference type="NCBIfam" id="TIGR00138">
    <property type="entry name" value="rsmG_gidB"/>
    <property type="match status" value="1"/>
</dbReference>
<dbReference type="PANTHER" id="PTHR31760">
    <property type="entry name" value="S-ADENOSYL-L-METHIONINE-DEPENDENT METHYLTRANSFERASES SUPERFAMILY PROTEIN"/>
    <property type="match status" value="1"/>
</dbReference>
<dbReference type="PANTHER" id="PTHR31760:SF0">
    <property type="entry name" value="S-ADENOSYL-L-METHIONINE-DEPENDENT METHYLTRANSFERASES SUPERFAMILY PROTEIN"/>
    <property type="match status" value="1"/>
</dbReference>
<dbReference type="Pfam" id="PF02527">
    <property type="entry name" value="GidB"/>
    <property type="match status" value="1"/>
</dbReference>
<dbReference type="SUPFAM" id="SSF53335">
    <property type="entry name" value="S-adenosyl-L-methionine-dependent methyltransferases"/>
    <property type="match status" value="1"/>
</dbReference>
<feature type="chain" id="PRO_1000075217" description="Ribosomal RNA small subunit methyltransferase G">
    <location>
        <begin position="1"/>
        <end position="211"/>
    </location>
</feature>
<feature type="binding site" evidence="1">
    <location>
        <position position="74"/>
    </location>
    <ligand>
        <name>S-adenosyl-L-methionine</name>
        <dbReference type="ChEBI" id="CHEBI:59789"/>
    </ligand>
</feature>
<feature type="binding site" evidence="1">
    <location>
        <position position="79"/>
    </location>
    <ligand>
        <name>S-adenosyl-L-methionine</name>
        <dbReference type="ChEBI" id="CHEBI:59789"/>
    </ligand>
</feature>
<feature type="binding site" evidence="1">
    <location>
        <begin position="125"/>
        <end position="126"/>
    </location>
    <ligand>
        <name>S-adenosyl-L-methionine</name>
        <dbReference type="ChEBI" id="CHEBI:59789"/>
    </ligand>
</feature>
<feature type="binding site" evidence="1">
    <location>
        <position position="140"/>
    </location>
    <ligand>
        <name>S-adenosyl-L-methionine</name>
        <dbReference type="ChEBI" id="CHEBI:59789"/>
    </ligand>
</feature>
<comment type="function">
    <text evidence="1">Specifically methylates the N7 position of guanine in position 518 of 16S rRNA.</text>
</comment>
<comment type="subcellular location">
    <subcellularLocation>
        <location evidence="1">Cytoplasm</location>
    </subcellularLocation>
</comment>
<comment type="similarity">
    <text evidence="1">Belongs to the methyltransferase superfamily. RNA methyltransferase RsmG family.</text>
</comment>
<protein>
    <recommendedName>
        <fullName evidence="1">Ribosomal RNA small subunit methyltransferase G</fullName>
        <ecNumber evidence="1">2.1.1.-</ecNumber>
    </recommendedName>
    <alternativeName>
        <fullName evidence="1">16S rRNA 7-methylguanosine methyltransferase</fullName>
        <shortName evidence="1">16S rRNA m7G methyltransferase</shortName>
    </alternativeName>
</protein>
<name>RSMG_CLASE</name>
<sequence length="211" mass="22723">MPEHTSVEMEPPIAASLFGVRMPVAREFASQLGSRGEELGLIGPLEPPRLWSRHIINSVLVAPLLNPGVVGDIGTGAGLPGLVLAIARPDVDFVLIEPMERRVAWLEEQVAHLGLDNVQVRRARAEDVANEISLDQVTARAVSAFSKLIPLTVPLVKTGGELVLMKGANAEREVEAASRAIRKHHLEDVEVITLGAGQVDEVTRVIRARVA</sequence>
<organism>
    <name type="scientific">Clavibacter sepedonicus</name>
    <name type="common">Clavibacter michiganensis subsp. sepedonicus</name>
    <dbReference type="NCBI Taxonomy" id="31964"/>
    <lineage>
        <taxon>Bacteria</taxon>
        <taxon>Bacillati</taxon>
        <taxon>Actinomycetota</taxon>
        <taxon>Actinomycetes</taxon>
        <taxon>Micrococcales</taxon>
        <taxon>Microbacteriaceae</taxon>
        <taxon>Clavibacter</taxon>
    </lineage>
</organism>